<proteinExistence type="evidence at transcript level"/>
<feature type="signal peptide" evidence="2">
    <location>
        <begin position="1"/>
        <end position="23"/>
    </location>
</feature>
<feature type="propeptide" id="PRO_0000401055" evidence="1">
    <location>
        <begin position="24"/>
        <end position="47"/>
    </location>
</feature>
<feature type="peptide" id="PRO_0000401056" description="Hainantoxin-XX.3">
    <location>
        <begin position="48"/>
        <end position="78"/>
    </location>
</feature>
<feature type="disulfide bond" evidence="1">
    <location>
        <begin position="49"/>
        <end position="62"/>
    </location>
</feature>
<feature type="disulfide bond" evidence="1">
    <location>
        <begin position="56"/>
        <end position="66"/>
    </location>
</feature>
<feature type="disulfide bond" evidence="1">
    <location>
        <begin position="61"/>
        <end position="77"/>
    </location>
</feature>
<evidence type="ECO:0000250" key="1"/>
<evidence type="ECO:0000255" key="2"/>
<reference key="1">
    <citation type="journal article" date="2010" name="J. Proteome Res.">
        <title>Molecular diversification of peptide toxins from the tarantula Haplopelma hainanum (Ornithoctonus hainana) venom based on transcriptomic, peptidomic, and genomic analyses.</title>
        <authorList>
            <person name="Tang X."/>
            <person name="Zhang Y."/>
            <person name="Hu W."/>
            <person name="Xu D."/>
            <person name="Tao H."/>
            <person name="Yang X."/>
            <person name="Li Y."/>
            <person name="Jiang L."/>
            <person name="Liang S."/>
        </authorList>
    </citation>
    <scope>NUCLEOTIDE SEQUENCE [LARGE SCALE MRNA]</scope>
    <source>
        <tissue>Venom gland</tissue>
    </source>
</reference>
<protein>
    <recommendedName>
        <fullName>Hainantoxin-XX.3</fullName>
        <shortName>HNTX-XX.3</shortName>
    </recommendedName>
    <alternativeName>
        <fullName>Peptide F8-26.11</fullName>
    </alternativeName>
</protein>
<sequence>MKSATLLALSFLLIASCFLICEAEHSRYEEHEILEENMGDVVNLEQRSCAKPGEMCMRIKCCDGQCGCNRGTGRCFCK</sequence>
<dbReference type="EMBL" id="GU293007">
    <property type="protein sequence ID" value="ADB56823.1"/>
    <property type="molecule type" value="mRNA"/>
</dbReference>
<dbReference type="SMR" id="D2Y2D0"/>
<dbReference type="ArachnoServer" id="AS001745">
    <property type="toxin name" value="U13-theraphotoxin-Hhn1a"/>
</dbReference>
<dbReference type="GO" id="GO:0005576">
    <property type="term" value="C:extracellular region"/>
    <property type="evidence" value="ECO:0007669"/>
    <property type="project" value="UniProtKB-SubCell"/>
</dbReference>
<dbReference type="GO" id="GO:0099106">
    <property type="term" value="F:ion channel regulator activity"/>
    <property type="evidence" value="ECO:0007669"/>
    <property type="project" value="UniProtKB-KW"/>
</dbReference>
<dbReference type="GO" id="GO:0090729">
    <property type="term" value="F:toxin activity"/>
    <property type="evidence" value="ECO:0007669"/>
    <property type="project" value="UniProtKB-KW"/>
</dbReference>
<comment type="function">
    <text>Putative ion channel inhibitor.</text>
</comment>
<comment type="subcellular location">
    <subcellularLocation>
        <location evidence="1">Secreted</location>
    </subcellularLocation>
</comment>
<comment type="tissue specificity">
    <text>Expressed by the venom gland.</text>
</comment>
<comment type="domain">
    <text evidence="1">The presence of a 'disulfide through disulfide knot' structurally defines this protein as a knottin.</text>
</comment>
<comment type="similarity">
    <text>Belongs to the hainantoxin family. 20 subfamily.</text>
</comment>
<keyword id="KW-1015">Disulfide bond</keyword>
<keyword id="KW-0872">Ion channel impairing toxin</keyword>
<keyword id="KW-0960">Knottin</keyword>
<keyword id="KW-0964">Secreted</keyword>
<keyword id="KW-0732">Signal</keyword>
<keyword id="KW-0800">Toxin</keyword>
<accession>D2Y2D0</accession>
<name>H20A3_CYRHA</name>
<organism>
    <name type="scientific">Cyriopagopus hainanus</name>
    <name type="common">Chinese bird spider</name>
    <name type="synonym">Haplopelma hainanum</name>
    <dbReference type="NCBI Taxonomy" id="209901"/>
    <lineage>
        <taxon>Eukaryota</taxon>
        <taxon>Metazoa</taxon>
        <taxon>Ecdysozoa</taxon>
        <taxon>Arthropoda</taxon>
        <taxon>Chelicerata</taxon>
        <taxon>Arachnida</taxon>
        <taxon>Araneae</taxon>
        <taxon>Mygalomorphae</taxon>
        <taxon>Theraphosidae</taxon>
        <taxon>Haplopelma</taxon>
    </lineage>
</organism>